<comment type="function">
    <text evidence="1">Part of the ecpRABCDE operon, which encodes the E.coli common pilus (ECP). ECP is found in both commensal and pathogenic strains and plays a dual role in early-stage biofilm development and host cell recognition (By similarity).</text>
</comment>
<comment type="induction">
    <text evidence="3">Negatively regulated by H-NS. Positively regulated by IHF and EcpR.</text>
</comment>
<comment type="similarity">
    <text evidence="4">Belongs to the EcpB/EcpE family.</text>
</comment>
<organism>
    <name type="scientific">Escherichia coli O127:H6 (strain E2348/69 / EPEC)</name>
    <dbReference type="NCBI Taxonomy" id="574521"/>
    <lineage>
        <taxon>Bacteria</taxon>
        <taxon>Pseudomonadati</taxon>
        <taxon>Pseudomonadota</taxon>
        <taxon>Gammaproteobacteria</taxon>
        <taxon>Enterobacterales</taxon>
        <taxon>Enterobacteriaceae</taxon>
        <taxon>Escherichia</taxon>
    </lineage>
</organism>
<proteinExistence type="evidence at transcript level"/>
<dbReference type="EMBL" id="FM180568">
    <property type="protein sequence ID" value="CAS07793.1"/>
    <property type="molecule type" value="Genomic_DNA"/>
</dbReference>
<dbReference type="RefSeq" id="WP_001339257.1">
    <property type="nucleotide sequence ID" value="NC_011601.1"/>
</dbReference>
<dbReference type="SMR" id="B7UJD7"/>
<dbReference type="KEGG" id="ecg:E2348C_0245"/>
<dbReference type="HOGENOM" id="CLU_106652_0_0_6"/>
<dbReference type="Proteomes" id="UP000008205">
    <property type="component" value="Chromosome"/>
</dbReference>
<dbReference type="Gene3D" id="2.60.40.10">
    <property type="entry name" value="Immunoglobulins"/>
    <property type="match status" value="1"/>
</dbReference>
<dbReference type="InterPro" id="IPR013783">
    <property type="entry name" value="Ig-like_fold"/>
</dbReference>
<dbReference type="InterPro" id="IPR008962">
    <property type="entry name" value="PapD-like_sf"/>
</dbReference>
<dbReference type="SUPFAM" id="SSF49354">
    <property type="entry name" value="PapD-like"/>
    <property type="match status" value="1"/>
</dbReference>
<reference key="1">
    <citation type="journal article" date="2009" name="J. Bacteriol.">
        <title>Complete genome sequence and comparative genome analysis of enteropathogenic Escherichia coli O127:H6 strain E2348/69.</title>
        <authorList>
            <person name="Iguchi A."/>
            <person name="Thomson N.R."/>
            <person name="Ogura Y."/>
            <person name="Saunders D."/>
            <person name="Ooka T."/>
            <person name="Henderson I.R."/>
            <person name="Harris D."/>
            <person name="Asadulghani M."/>
            <person name="Kurokawa K."/>
            <person name="Dean P."/>
            <person name="Kenny B."/>
            <person name="Quail M.A."/>
            <person name="Thurston S."/>
            <person name="Dougan G."/>
            <person name="Hayashi T."/>
            <person name="Parkhill J."/>
            <person name="Frankel G."/>
        </authorList>
    </citation>
    <scope>NUCLEOTIDE SEQUENCE [LARGE SCALE GENOMIC DNA]</scope>
    <source>
        <strain>E2348/69 / EPEC</strain>
    </source>
</reference>
<reference key="2">
    <citation type="journal article" date="2012" name="J. Bacteriol.">
        <title>Transcriptional regulation of the ecp operon by EcpR, IHF, and H-NS in attaching and effacing Escherichia coli.</title>
        <authorList>
            <person name="Martinez-Santos V.I."/>
            <person name="Medrano-Lopez A."/>
            <person name="Saldana Z."/>
            <person name="Giron J.A."/>
            <person name="Puente J.L."/>
        </authorList>
    </citation>
    <scope>INDUCTION</scope>
    <source>
        <strain>E2348/69 / EPEC</strain>
    </source>
</reference>
<evidence type="ECO:0000250" key="1"/>
<evidence type="ECO:0000255" key="2"/>
<evidence type="ECO:0000269" key="3">
    <source>
    </source>
</evidence>
<evidence type="ECO:0000305" key="4"/>
<protein>
    <recommendedName>
        <fullName>Probable fimbrial chaperone EcpE</fullName>
    </recommendedName>
</protein>
<keyword id="KW-0143">Chaperone</keyword>
<keyword id="KW-1029">Fimbrium biogenesis</keyword>
<keyword id="KW-1185">Reference proteome</keyword>
<keyword id="KW-0732">Signal</keyword>
<accession>B7UJD7</accession>
<gene>
    <name type="primary">ecpE</name>
    <name type="ordered locus">E2348C_0245</name>
</gene>
<sequence>MFRRRGVTLTKALLTVVCMLAAPLTQAISVGNLTFSLPSETDFVSKRVVNNNKSARIYRIAISAIDSPGSSELRTRPVDGELLFAPRQLALQAGESEYFKFYYHGPRDNRERYYRVSFREVPTRNLTKRSPTGGEVSTEPVVVMDTILVVRPRQVQFKWSFDQVTGTVSNTGNTWFKLLIKPGCDSTEEEGDAWYLRPGDVVHQPELRQPGNHYLVYNDKFIKISDSCPAKPPSAD</sequence>
<feature type="signal peptide" evidence="2">
    <location>
        <begin position="1"/>
        <end position="27"/>
    </location>
</feature>
<feature type="chain" id="PRO_0000429538" description="Probable fimbrial chaperone EcpE">
    <location>
        <begin position="28"/>
        <end position="236"/>
    </location>
</feature>
<name>ECPE_ECO27</name>